<keyword id="KW-0309">Germination</keyword>
<keyword id="KW-0342">GTP-binding</keyword>
<keyword id="KW-0378">Hydrolase</keyword>
<keyword id="KW-0533">Nickel</keyword>
<keyword id="KW-0547">Nucleotide-binding</keyword>
<keyword id="KW-1185">Reference proteome</keyword>
<gene>
    <name type="primary">prpE</name>
    <name type="synonym">yjbP</name>
    <name type="ordered locus">BSU11630</name>
</gene>
<proteinExistence type="evidence at protein level"/>
<organism>
    <name type="scientific">Bacillus subtilis (strain 168)</name>
    <dbReference type="NCBI Taxonomy" id="224308"/>
    <lineage>
        <taxon>Bacteria</taxon>
        <taxon>Bacillati</taxon>
        <taxon>Bacillota</taxon>
        <taxon>Bacilli</taxon>
        <taxon>Bacillales</taxon>
        <taxon>Bacillaceae</taxon>
        <taxon>Bacillus</taxon>
    </lineage>
</organism>
<comment type="function">
    <text evidence="2">Asymmetrically hydrolyzes Ap4p to yield AMP and ATP. Does not hydrolyze Ap2a or Ap6A. Also has an ATPase activity. Was shown to dephosphorylate phosphotyrosine but not phosphoserine or phosphothreonine from phosphorylated peptides. Involved in spore germination by controlling expression of genes coding for GerA and GerK receptors.</text>
</comment>
<comment type="catalytic activity">
    <reaction evidence="1">
        <text>P(1),P(4)-bis(5'-guanosyl) tetraphosphate + H2O = GMP + GTP + 2 H(+)</text>
        <dbReference type="Rhea" id="RHEA:22484"/>
        <dbReference type="ChEBI" id="CHEBI:15377"/>
        <dbReference type="ChEBI" id="CHEBI:15378"/>
        <dbReference type="ChEBI" id="CHEBI:37565"/>
        <dbReference type="ChEBI" id="CHEBI:57553"/>
        <dbReference type="ChEBI" id="CHEBI:58115"/>
        <dbReference type="EC" id="3.6.1.17"/>
    </reaction>
</comment>
<comment type="cofactor">
    <cofactor evidence="1">
        <name>Ni(2+)</name>
        <dbReference type="ChEBI" id="CHEBI:49786"/>
    </cofactor>
    <text evidence="1">Nickel. 100-fold less efficiency with manganese.</text>
</comment>
<comment type="activity regulation">
    <text>Inhibited by EDTA.</text>
</comment>
<comment type="subcellular location">
    <subcellularLocation>
        <location evidence="2">Forespore</location>
    </subcellularLocation>
</comment>
<comment type="similarity">
    <text evidence="3">Belongs to the PrpE family.</text>
</comment>
<name>PRPE_BACSU</name>
<reference key="1">
    <citation type="journal article" date="1997" name="Nature">
        <title>The complete genome sequence of the Gram-positive bacterium Bacillus subtilis.</title>
        <authorList>
            <person name="Kunst F."/>
            <person name="Ogasawara N."/>
            <person name="Moszer I."/>
            <person name="Albertini A.M."/>
            <person name="Alloni G."/>
            <person name="Azevedo V."/>
            <person name="Bertero M.G."/>
            <person name="Bessieres P."/>
            <person name="Bolotin A."/>
            <person name="Borchert S."/>
            <person name="Borriss R."/>
            <person name="Boursier L."/>
            <person name="Brans A."/>
            <person name="Braun M."/>
            <person name="Brignell S.C."/>
            <person name="Bron S."/>
            <person name="Brouillet S."/>
            <person name="Bruschi C.V."/>
            <person name="Caldwell B."/>
            <person name="Capuano V."/>
            <person name="Carter N.M."/>
            <person name="Choi S.-K."/>
            <person name="Codani J.-J."/>
            <person name="Connerton I.F."/>
            <person name="Cummings N.J."/>
            <person name="Daniel R.A."/>
            <person name="Denizot F."/>
            <person name="Devine K.M."/>
            <person name="Duesterhoeft A."/>
            <person name="Ehrlich S.D."/>
            <person name="Emmerson P.T."/>
            <person name="Entian K.-D."/>
            <person name="Errington J."/>
            <person name="Fabret C."/>
            <person name="Ferrari E."/>
            <person name="Foulger D."/>
            <person name="Fritz C."/>
            <person name="Fujita M."/>
            <person name="Fujita Y."/>
            <person name="Fuma S."/>
            <person name="Galizzi A."/>
            <person name="Galleron N."/>
            <person name="Ghim S.-Y."/>
            <person name="Glaser P."/>
            <person name="Goffeau A."/>
            <person name="Golightly E.J."/>
            <person name="Grandi G."/>
            <person name="Guiseppi G."/>
            <person name="Guy B.J."/>
            <person name="Haga K."/>
            <person name="Haiech J."/>
            <person name="Harwood C.R."/>
            <person name="Henaut A."/>
            <person name="Hilbert H."/>
            <person name="Holsappel S."/>
            <person name="Hosono S."/>
            <person name="Hullo M.-F."/>
            <person name="Itaya M."/>
            <person name="Jones L.-M."/>
            <person name="Joris B."/>
            <person name="Karamata D."/>
            <person name="Kasahara Y."/>
            <person name="Klaerr-Blanchard M."/>
            <person name="Klein C."/>
            <person name="Kobayashi Y."/>
            <person name="Koetter P."/>
            <person name="Koningstein G."/>
            <person name="Krogh S."/>
            <person name="Kumano M."/>
            <person name="Kurita K."/>
            <person name="Lapidus A."/>
            <person name="Lardinois S."/>
            <person name="Lauber J."/>
            <person name="Lazarevic V."/>
            <person name="Lee S.-M."/>
            <person name="Levine A."/>
            <person name="Liu H."/>
            <person name="Masuda S."/>
            <person name="Mauel C."/>
            <person name="Medigue C."/>
            <person name="Medina N."/>
            <person name="Mellado R.P."/>
            <person name="Mizuno M."/>
            <person name="Moestl D."/>
            <person name="Nakai S."/>
            <person name="Noback M."/>
            <person name="Noone D."/>
            <person name="O'Reilly M."/>
            <person name="Ogawa K."/>
            <person name="Ogiwara A."/>
            <person name="Oudega B."/>
            <person name="Park S.-H."/>
            <person name="Parro V."/>
            <person name="Pohl T.M."/>
            <person name="Portetelle D."/>
            <person name="Porwollik S."/>
            <person name="Prescott A.M."/>
            <person name="Presecan E."/>
            <person name="Pujic P."/>
            <person name="Purnelle B."/>
            <person name="Rapoport G."/>
            <person name="Rey M."/>
            <person name="Reynolds S."/>
            <person name="Rieger M."/>
            <person name="Rivolta C."/>
            <person name="Rocha E."/>
            <person name="Roche B."/>
            <person name="Rose M."/>
            <person name="Sadaie Y."/>
            <person name="Sato T."/>
            <person name="Scanlan E."/>
            <person name="Schleich S."/>
            <person name="Schroeter R."/>
            <person name="Scoffone F."/>
            <person name="Sekiguchi J."/>
            <person name="Sekowska A."/>
            <person name="Seror S.J."/>
            <person name="Serror P."/>
            <person name="Shin B.-S."/>
            <person name="Soldo B."/>
            <person name="Sorokin A."/>
            <person name="Tacconi E."/>
            <person name="Takagi T."/>
            <person name="Takahashi H."/>
            <person name="Takemaru K."/>
            <person name="Takeuchi M."/>
            <person name="Tamakoshi A."/>
            <person name="Tanaka T."/>
            <person name="Terpstra P."/>
            <person name="Tognoni A."/>
            <person name="Tosato V."/>
            <person name="Uchiyama S."/>
            <person name="Vandenbol M."/>
            <person name="Vannier F."/>
            <person name="Vassarotti A."/>
            <person name="Viari A."/>
            <person name="Wambutt R."/>
            <person name="Wedler E."/>
            <person name="Wedler H."/>
            <person name="Weitzenegger T."/>
            <person name="Winters P."/>
            <person name="Wipat A."/>
            <person name="Yamamoto H."/>
            <person name="Yamane K."/>
            <person name="Yasumoto K."/>
            <person name="Yata K."/>
            <person name="Yoshida K."/>
            <person name="Yoshikawa H.-F."/>
            <person name="Zumstein E."/>
            <person name="Yoshikawa H."/>
            <person name="Danchin A."/>
        </authorList>
    </citation>
    <scope>NUCLEOTIDE SEQUENCE [LARGE SCALE GENOMIC DNA]</scope>
    <source>
        <strain>168</strain>
    </source>
</reference>
<reference key="2">
    <citation type="journal article" date="2002" name="Biochem. J.">
        <title>PrpE, a PPP protein phosphatase from Bacillus subtilis with unusual substrate specificity.</title>
        <authorList>
            <person name="Iwanicki A."/>
            <person name="Herman-Antosiewicz A."/>
            <person name="Pierechod M."/>
            <person name="Seror S.J."/>
            <person name="Obuchowski M."/>
        </authorList>
    </citation>
    <scope>CATALYTIC ACTIVITY</scope>
    <scope>COFACTOR</scope>
    <scope>SUBSTRATE SPECIFICITY</scope>
    <scope>INHIBITION</scope>
    <source>
        <strain>168</strain>
    </source>
</reference>
<reference key="3">
    <citation type="journal article" date="2006" name="J. Bacteriol.">
        <title>Expression of genes coding for GerA and GerK spore germination receptors is dependent on the protein phosphatase PrpE.</title>
        <authorList>
            <person name="Hinc K."/>
            <person name="Nagorska K."/>
            <person name="Iwanicki A."/>
            <person name="Wegrzyn G."/>
            <person name="Seror S.J."/>
            <person name="Obuchowski M."/>
        </authorList>
    </citation>
    <scope>FUNCTION IN SPORE GERMINATION</scope>
    <scope>SUBCELLULAR LOCATION</scope>
    <source>
        <strain>168</strain>
    </source>
</reference>
<sequence length="244" mass="27463">MAYDIISDIHGCYDEMTALIQKLGYTIKNGVPVHEEGRVLVFAGDLTDRGPKSIEVIRFVAGAYEKGAVRYVPGNHCNKLYRYLKGNPVKVMHGLETTAAELEELSKDEKKSVSEQFMKLYETAPLYDILHNGELVVAHAGIRADDIGKYTRRVKDFVLYGDVTGETYPDGRPIRRDWAAAYNGKAWVVYGHTPVKEPRKVNRTINIDTGCVFGNQLTGFRFPEIETVSVPSSLPYDESRFRPI</sequence>
<dbReference type="EC" id="3.6.1.17"/>
<dbReference type="EMBL" id="AL009126">
    <property type="protein sequence ID" value="CAB13020.1"/>
    <property type="molecule type" value="Genomic_DNA"/>
</dbReference>
<dbReference type="PIR" id="H69844">
    <property type="entry name" value="H69844"/>
</dbReference>
<dbReference type="RefSeq" id="NP_389045.1">
    <property type="nucleotide sequence ID" value="NC_000964.3"/>
</dbReference>
<dbReference type="RefSeq" id="WP_003244765.1">
    <property type="nucleotide sequence ID" value="NZ_OZ025638.1"/>
</dbReference>
<dbReference type="SMR" id="O31614"/>
<dbReference type="FunCoup" id="O31614">
    <property type="interactions" value="15"/>
</dbReference>
<dbReference type="STRING" id="224308.BSU11630"/>
<dbReference type="PaxDb" id="224308-BSU11630"/>
<dbReference type="DNASU" id="936412"/>
<dbReference type="EnsemblBacteria" id="CAB13020">
    <property type="protein sequence ID" value="CAB13020"/>
    <property type="gene ID" value="BSU_11630"/>
</dbReference>
<dbReference type="GeneID" id="936412"/>
<dbReference type="KEGG" id="bsu:BSU11630"/>
<dbReference type="PATRIC" id="fig|224308.179.peg.1252"/>
<dbReference type="eggNOG" id="COG0639">
    <property type="taxonomic scope" value="Bacteria"/>
</dbReference>
<dbReference type="InParanoid" id="O31614"/>
<dbReference type="OrthoDB" id="9807890at2"/>
<dbReference type="PhylomeDB" id="O31614"/>
<dbReference type="BioCyc" id="BSUB:BSU11630-MONOMER"/>
<dbReference type="Proteomes" id="UP000001570">
    <property type="component" value="Chromosome"/>
</dbReference>
<dbReference type="GO" id="GO:0005737">
    <property type="term" value="C:cytoplasm"/>
    <property type="evidence" value="ECO:0000318"/>
    <property type="project" value="GO_Central"/>
</dbReference>
<dbReference type="GO" id="GO:0042763">
    <property type="term" value="C:intracellular immature spore"/>
    <property type="evidence" value="ECO:0007669"/>
    <property type="project" value="UniProtKB-SubCell"/>
</dbReference>
<dbReference type="GO" id="GO:0004081">
    <property type="term" value="F:bis(5'-nucleosyl)-tetraphosphatase (asymmetrical) activity"/>
    <property type="evidence" value="ECO:0007669"/>
    <property type="project" value="UniProtKB-UniRule"/>
</dbReference>
<dbReference type="GO" id="GO:0005525">
    <property type="term" value="F:GTP binding"/>
    <property type="evidence" value="ECO:0007669"/>
    <property type="project" value="UniProtKB-KW"/>
</dbReference>
<dbReference type="GO" id="GO:0016151">
    <property type="term" value="F:nickel cation binding"/>
    <property type="evidence" value="ECO:0007669"/>
    <property type="project" value="UniProtKB-UniRule"/>
</dbReference>
<dbReference type="GO" id="GO:0016791">
    <property type="term" value="F:phosphatase activity"/>
    <property type="evidence" value="ECO:0000318"/>
    <property type="project" value="GO_Central"/>
</dbReference>
<dbReference type="CDD" id="cd07423">
    <property type="entry name" value="MPP_Prp_like"/>
    <property type="match status" value="1"/>
</dbReference>
<dbReference type="Gene3D" id="3.60.21.10">
    <property type="match status" value="1"/>
</dbReference>
<dbReference type="HAMAP" id="MF_01443">
    <property type="entry name" value="PrpE"/>
    <property type="match status" value="1"/>
</dbReference>
<dbReference type="InterPro" id="IPR050126">
    <property type="entry name" value="Ap4A_hydrolase"/>
</dbReference>
<dbReference type="InterPro" id="IPR023937">
    <property type="entry name" value="Bis(5'-nucleosyl)-tetraP_PrpE"/>
</dbReference>
<dbReference type="InterPro" id="IPR004843">
    <property type="entry name" value="Calcineurin-like_PHP_ApaH"/>
</dbReference>
<dbReference type="InterPro" id="IPR029052">
    <property type="entry name" value="Metallo-depent_PP-like"/>
</dbReference>
<dbReference type="InterPro" id="IPR041780">
    <property type="entry name" value="MPP_PrpE-like"/>
</dbReference>
<dbReference type="NCBIfam" id="NF010148">
    <property type="entry name" value="PRK13625.1"/>
    <property type="match status" value="1"/>
</dbReference>
<dbReference type="PANTHER" id="PTHR42850:SF7">
    <property type="entry name" value="BIS(5'-NUCLEOSYL)-TETRAPHOSPHATASE PRPE [ASYMMETRICAL]"/>
    <property type="match status" value="1"/>
</dbReference>
<dbReference type="PANTHER" id="PTHR42850">
    <property type="entry name" value="METALLOPHOSPHOESTERASE"/>
    <property type="match status" value="1"/>
</dbReference>
<dbReference type="Pfam" id="PF00149">
    <property type="entry name" value="Metallophos"/>
    <property type="match status" value="1"/>
</dbReference>
<dbReference type="SUPFAM" id="SSF56300">
    <property type="entry name" value="Metallo-dependent phosphatases"/>
    <property type="match status" value="1"/>
</dbReference>
<protein>
    <recommendedName>
        <fullName>Bis(5'-nucleosyl)-tetraphosphatase PrpE [asymmetrical]</fullName>
        <ecNumber>3.6.1.17</ecNumber>
    </recommendedName>
    <alternativeName>
        <fullName>Ap4A hydrolase</fullName>
    </alternativeName>
    <alternativeName>
        <fullName>Diadenosine 5',5'''-P1,P4-tetraphosphate asymmetrical hydrolase</fullName>
        <shortName>Diadenosine tetraphosphatase</shortName>
    </alternativeName>
</protein>
<feature type="chain" id="PRO_0000297545" description="Bis(5'-nucleosyl)-tetraphosphatase PrpE [asymmetrical]">
    <location>
        <begin position="1"/>
        <end position="244"/>
    </location>
</feature>
<evidence type="ECO:0000269" key="1">
    <source>
    </source>
</evidence>
<evidence type="ECO:0000269" key="2">
    <source>
    </source>
</evidence>
<evidence type="ECO:0000305" key="3"/>
<accession>O31614</accession>